<proteinExistence type="inferred from homology"/>
<sequence length="203" mass="22507">MVLGLFSIIFSFSRKCHYASRMLLVSFLLDMAVRAMTSHINICSKLGAELNDFAVFTTFGLASALLLGVDGLLSGILAIIYVSAASFHLCFYSPGVPSTYKGLPCPYASCILASTSLLTKGNRFILCCMASLMILFMMDQSYYPYDKILESENWKKLVYIGGVIMLFFSPLSLSAFYCLMWSLSYIFFPDALWGKAACLSPQH</sequence>
<dbReference type="EMBL" id="AC098484">
    <property type="status" value="NOT_ANNOTATED_CDS"/>
    <property type="molecule type" value="Genomic_DNA"/>
</dbReference>
<dbReference type="EMBL" id="AL512353">
    <property type="status" value="NOT_ANNOTATED_CDS"/>
    <property type="molecule type" value="Genomic_DNA"/>
</dbReference>
<dbReference type="CCDS" id="CCDS90932.1"/>
<dbReference type="RefSeq" id="NP_001341531.2">
    <property type="nucleotide sequence ID" value="NM_001354602.2"/>
</dbReference>
<dbReference type="SMR" id="A0A1B0GVZ9"/>
<dbReference type="STRING" id="9606.ENSP00000490716"/>
<dbReference type="BioMuta" id="TMEM269"/>
<dbReference type="MassIVE" id="A0A1B0GVZ9"/>
<dbReference type="Ensembl" id="ENST00000421630.6">
    <property type="protein sequence ID" value="ENSP00000490287.1"/>
    <property type="gene ID" value="ENSG00000274386.6"/>
</dbReference>
<dbReference type="Ensembl" id="ENST00000536543.6">
    <property type="protein sequence ID" value="ENSP00000490716.2"/>
    <property type="gene ID" value="ENSG00000274386.6"/>
</dbReference>
<dbReference type="Ensembl" id="ENST00000637012.2">
    <property type="protein sequence ID" value="ENSP00000490213.1"/>
    <property type="gene ID" value="ENSG00000274386.6"/>
</dbReference>
<dbReference type="GeneID" id="100129924"/>
<dbReference type="MANE-Select" id="ENST00000637012.2">
    <property type="protein sequence ID" value="ENSP00000490213.1"/>
    <property type="RefSeq nucleotide sequence ID" value="NM_001354602.2"/>
    <property type="RefSeq protein sequence ID" value="NP_001341531.2"/>
</dbReference>
<dbReference type="AGR" id="HGNC:52381"/>
<dbReference type="GeneCards" id="TMEM269"/>
<dbReference type="HGNC" id="HGNC:52381">
    <property type="gene designation" value="TMEM269"/>
</dbReference>
<dbReference type="HPA" id="ENSG00000274386">
    <property type="expression patterns" value="Tissue enhanced (retina)"/>
</dbReference>
<dbReference type="neXtProt" id="NX_A0A1B0GVZ9"/>
<dbReference type="VEuPathDB" id="HostDB:ENSG00000274386"/>
<dbReference type="GeneTree" id="ENSGT01050000245090"/>
<dbReference type="InParanoid" id="A0A1B0GVZ9"/>
<dbReference type="OrthoDB" id="448573at2759"/>
<dbReference type="PAN-GO" id="A0A1B0GVZ9">
    <property type="GO annotations" value="0 GO annotations based on evolutionary models"/>
</dbReference>
<dbReference type="BioGRID-ORCS" id="100129924">
    <property type="hits" value="9 hits in 211 CRISPR screens"/>
</dbReference>
<dbReference type="GenomeRNAi" id="100129924"/>
<dbReference type="Pharos" id="A0A1B0GVZ9">
    <property type="development level" value="Tdark"/>
</dbReference>
<dbReference type="PRO" id="PR:A0A1B0GVZ9"/>
<dbReference type="Proteomes" id="UP000005640">
    <property type="component" value="Chromosome 1"/>
</dbReference>
<dbReference type="RNAct" id="A0A1B0GVZ9">
    <property type="molecule type" value="protein"/>
</dbReference>
<dbReference type="Bgee" id="ENSG00000274386">
    <property type="expression patterns" value="Expressed in thymus and 100 other cell types or tissues"/>
</dbReference>
<dbReference type="ExpressionAtlas" id="A0A1B0GVZ9">
    <property type="expression patterns" value="baseline and differential"/>
</dbReference>
<dbReference type="GO" id="GO:0016020">
    <property type="term" value="C:membrane"/>
    <property type="evidence" value="ECO:0007669"/>
    <property type="project" value="UniProtKB-SubCell"/>
</dbReference>
<name>TM269_HUMAN</name>
<accession>A0A1B0GVZ9</accession>
<accession>A0A1B0GUR4</accession>
<comment type="subcellular location">
    <subcellularLocation>
        <location evidence="1">Membrane</location>
        <topology evidence="1">Multi-pass membrane protein</topology>
    </subcellularLocation>
</comment>
<feature type="chain" id="PRO_0000440585" description="Transmembrane protein 269">
    <location>
        <begin position="1"/>
        <end position="203"/>
    </location>
</feature>
<feature type="transmembrane region" description="Helical" evidence="1">
    <location>
        <begin position="60"/>
        <end position="80"/>
    </location>
</feature>
<feature type="transmembrane region" description="Helical" evidence="1">
    <location>
        <begin position="124"/>
        <end position="144"/>
    </location>
</feature>
<feature type="transmembrane region" description="Helical" evidence="1">
    <location>
        <begin position="157"/>
        <end position="177"/>
    </location>
</feature>
<keyword id="KW-0472">Membrane</keyword>
<keyword id="KW-1185">Reference proteome</keyword>
<keyword id="KW-0812">Transmembrane</keyword>
<keyword id="KW-1133">Transmembrane helix</keyword>
<evidence type="ECO:0000255" key="1"/>
<evidence type="ECO:0000312" key="2">
    <source>
        <dbReference type="HGNC" id="HGNC:52381"/>
    </source>
</evidence>
<organism>
    <name type="scientific">Homo sapiens</name>
    <name type="common">Human</name>
    <dbReference type="NCBI Taxonomy" id="9606"/>
    <lineage>
        <taxon>Eukaryota</taxon>
        <taxon>Metazoa</taxon>
        <taxon>Chordata</taxon>
        <taxon>Craniata</taxon>
        <taxon>Vertebrata</taxon>
        <taxon>Euteleostomi</taxon>
        <taxon>Mammalia</taxon>
        <taxon>Eutheria</taxon>
        <taxon>Euarchontoglires</taxon>
        <taxon>Primates</taxon>
        <taxon>Haplorrhini</taxon>
        <taxon>Catarrhini</taxon>
        <taxon>Hominidae</taxon>
        <taxon>Homo</taxon>
    </lineage>
</organism>
<protein>
    <recommendedName>
        <fullName evidence="2">Transmembrane protein 269</fullName>
    </recommendedName>
</protein>
<reference key="1">
    <citation type="journal article" date="2006" name="Nature">
        <title>The DNA sequence and biological annotation of human chromosome 1.</title>
        <authorList>
            <person name="Gregory S.G."/>
            <person name="Barlow K.F."/>
            <person name="McLay K.E."/>
            <person name="Kaul R."/>
            <person name="Swarbreck D."/>
            <person name="Dunham A."/>
            <person name="Scott C.E."/>
            <person name="Howe K.L."/>
            <person name="Woodfine K."/>
            <person name="Spencer C.C.A."/>
            <person name="Jones M.C."/>
            <person name="Gillson C."/>
            <person name="Searle S."/>
            <person name="Zhou Y."/>
            <person name="Kokocinski F."/>
            <person name="McDonald L."/>
            <person name="Evans R."/>
            <person name="Phillips K."/>
            <person name="Atkinson A."/>
            <person name="Cooper R."/>
            <person name="Jones C."/>
            <person name="Hall R.E."/>
            <person name="Andrews T.D."/>
            <person name="Lloyd C."/>
            <person name="Ainscough R."/>
            <person name="Almeida J.P."/>
            <person name="Ambrose K.D."/>
            <person name="Anderson F."/>
            <person name="Andrew R.W."/>
            <person name="Ashwell R.I.S."/>
            <person name="Aubin K."/>
            <person name="Babbage A.K."/>
            <person name="Bagguley C.L."/>
            <person name="Bailey J."/>
            <person name="Beasley H."/>
            <person name="Bethel G."/>
            <person name="Bird C.P."/>
            <person name="Bray-Allen S."/>
            <person name="Brown J.Y."/>
            <person name="Brown A.J."/>
            <person name="Buckley D."/>
            <person name="Burton J."/>
            <person name="Bye J."/>
            <person name="Carder C."/>
            <person name="Chapman J.C."/>
            <person name="Clark S.Y."/>
            <person name="Clarke G."/>
            <person name="Clee C."/>
            <person name="Cobley V."/>
            <person name="Collier R.E."/>
            <person name="Corby N."/>
            <person name="Coville G.J."/>
            <person name="Davies J."/>
            <person name="Deadman R."/>
            <person name="Dunn M."/>
            <person name="Earthrowl M."/>
            <person name="Ellington A.G."/>
            <person name="Errington H."/>
            <person name="Frankish A."/>
            <person name="Frankland J."/>
            <person name="French L."/>
            <person name="Garner P."/>
            <person name="Garnett J."/>
            <person name="Gay L."/>
            <person name="Ghori M.R.J."/>
            <person name="Gibson R."/>
            <person name="Gilby L.M."/>
            <person name="Gillett W."/>
            <person name="Glithero R.J."/>
            <person name="Grafham D.V."/>
            <person name="Griffiths C."/>
            <person name="Griffiths-Jones S."/>
            <person name="Grocock R."/>
            <person name="Hammond S."/>
            <person name="Harrison E.S.I."/>
            <person name="Hart E."/>
            <person name="Haugen E."/>
            <person name="Heath P.D."/>
            <person name="Holmes S."/>
            <person name="Holt K."/>
            <person name="Howden P.J."/>
            <person name="Hunt A.R."/>
            <person name="Hunt S.E."/>
            <person name="Hunter G."/>
            <person name="Isherwood J."/>
            <person name="James R."/>
            <person name="Johnson C."/>
            <person name="Johnson D."/>
            <person name="Joy A."/>
            <person name="Kay M."/>
            <person name="Kershaw J.K."/>
            <person name="Kibukawa M."/>
            <person name="Kimberley A.M."/>
            <person name="King A."/>
            <person name="Knights A.J."/>
            <person name="Lad H."/>
            <person name="Laird G."/>
            <person name="Lawlor S."/>
            <person name="Leongamornlert D.A."/>
            <person name="Lloyd D.M."/>
            <person name="Loveland J."/>
            <person name="Lovell J."/>
            <person name="Lush M.J."/>
            <person name="Lyne R."/>
            <person name="Martin S."/>
            <person name="Mashreghi-Mohammadi M."/>
            <person name="Matthews L."/>
            <person name="Matthews N.S.W."/>
            <person name="McLaren S."/>
            <person name="Milne S."/>
            <person name="Mistry S."/>
            <person name="Moore M.J.F."/>
            <person name="Nickerson T."/>
            <person name="O'Dell C.N."/>
            <person name="Oliver K."/>
            <person name="Palmeiri A."/>
            <person name="Palmer S.A."/>
            <person name="Parker A."/>
            <person name="Patel D."/>
            <person name="Pearce A.V."/>
            <person name="Peck A.I."/>
            <person name="Pelan S."/>
            <person name="Phelps K."/>
            <person name="Phillimore B.J."/>
            <person name="Plumb R."/>
            <person name="Rajan J."/>
            <person name="Raymond C."/>
            <person name="Rouse G."/>
            <person name="Saenphimmachak C."/>
            <person name="Sehra H.K."/>
            <person name="Sheridan E."/>
            <person name="Shownkeen R."/>
            <person name="Sims S."/>
            <person name="Skuce C.D."/>
            <person name="Smith M."/>
            <person name="Steward C."/>
            <person name="Subramanian S."/>
            <person name="Sycamore N."/>
            <person name="Tracey A."/>
            <person name="Tromans A."/>
            <person name="Van Helmond Z."/>
            <person name="Wall M."/>
            <person name="Wallis J.M."/>
            <person name="White S."/>
            <person name="Whitehead S.L."/>
            <person name="Wilkinson J.E."/>
            <person name="Willey D.L."/>
            <person name="Williams H."/>
            <person name="Wilming L."/>
            <person name="Wray P.W."/>
            <person name="Wu Z."/>
            <person name="Coulson A."/>
            <person name="Vaudin M."/>
            <person name="Sulston J.E."/>
            <person name="Durbin R.M."/>
            <person name="Hubbard T."/>
            <person name="Wooster R."/>
            <person name="Dunham I."/>
            <person name="Carter N.P."/>
            <person name="McVean G."/>
            <person name="Ross M.T."/>
            <person name="Harrow J."/>
            <person name="Olson M.V."/>
            <person name="Beck S."/>
            <person name="Rogers J."/>
            <person name="Bentley D.R."/>
        </authorList>
    </citation>
    <scope>NUCLEOTIDE SEQUENCE [LARGE SCALE GENOMIC DNA]</scope>
</reference>
<gene>
    <name evidence="2" type="primary">TMEM269</name>
</gene>